<evidence type="ECO:0000250" key="1">
    <source>
        <dbReference type="UniProtKB" id="Q9NWV4"/>
    </source>
</evidence>
<evidence type="ECO:0000305" key="2"/>
<comment type="domain">
    <text evidence="1">Requires a bound zinc ion for normal folding and solubility.</text>
</comment>
<comment type="similarity">
    <text evidence="2">Belongs to the UPF0587 family.</text>
</comment>
<proteinExistence type="inferred from homology"/>
<keyword id="KW-0479">Metal-binding</keyword>
<keyword id="KW-1185">Reference proteome</keyword>
<keyword id="KW-0862">Zinc</keyword>
<sequence>MPFLALELKCQLKGITDLRPDDTDSFHWHMKLKCTNCGEAPDHWQYVVLNEMLDVPGSRGEANLVEKCKLCGRVNTLTIVEDMFKSYNIEQNEKWQQIAVFDCRGLEPFDFDPRDEWIAKSVETGNAFHEIDLSEKEWVDFDDKAMEAVEISEMSSQFTTIRDPKKK</sequence>
<feature type="chain" id="PRO_0000337874" description="UPF0587 protein F46B6.12">
    <location>
        <begin position="1"/>
        <end position="167"/>
    </location>
</feature>
<feature type="binding site" evidence="1">
    <location>
        <position position="34"/>
    </location>
    <ligand>
        <name>Zn(2+)</name>
        <dbReference type="ChEBI" id="CHEBI:29105"/>
    </ligand>
</feature>
<feature type="binding site" evidence="1">
    <location>
        <position position="37"/>
    </location>
    <ligand>
        <name>Zn(2+)</name>
        <dbReference type="ChEBI" id="CHEBI:29105"/>
    </ligand>
</feature>
<feature type="binding site" evidence="1">
    <location>
        <position position="68"/>
    </location>
    <ligand>
        <name>Zn(2+)</name>
        <dbReference type="ChEBI" id="CHEBI:29105"/>
    </ligand>
</feature>
<feature type="binding site" evidence="1">
    <location>
        <position position="71"/>
    </location>
    <ligand>
        <name>Zn(2+)</name>
        <dbReference type="ChEBI" id="CHEBI:29105"/>
    </ligand>
</feature>
<gene>
    <name type="ORF">F46B6.12</name>
</gene>
<reference key="1">
    <citation type="journal article" date="1998" name="Science">
        <title>Genome sequence of the nematode C. elegans: a platform for investigating biology.</title>
        <authorList>
            <consortium name="The C. elegans sequencing consortium"/>
        </authorList>
    </citation>
    <scope>NUCLEOTIDE SEQUENCE [LARGE SCALE GENOMIC DNA]</scope>
    <source>
        <strain>Bristol N2</strain>
    </source>
</reference>
<name>U587_CAEEL</name>
<accession>Q9BI88</accession>
<dbReference type="EMBL" id="Z70780">
    <property type="protein sequence ID" value="CAC35815.2"/>
    <property type="molecule type" value="Genomic_DNA"/>
</dbReference>
<dbReference type="RefSeq" id="NP_505521.2">
    <property type="nucleotide sequence ID" value="NM_073120.5"/>
</dbReference>
<dbReference type="SMR" id="Q9BI88"/>
<dbReference type="BioGRID" id="44406">
    <property type="interactions" value="8"/>
</dbReference>
<dbReference type="FunCoup" id="Q9BI88">
    <property type="interactions" value="2289"/>
</dbReference>
<dbReference type="STRING" id="6239.F46B6.12.1"/>
<dbReference type="PaxDb" id="6239-F46B6.12"/>
<dbReference type="PeptideAtlas" id="Q9BI88"/>
<dbReference type="EnsemblMetazoa" id="F46B6.12.1">
    <property type="protein sequence ID" value="F46B6.12.1"/>
    <property type="gene ID" value="WBGene00009776"/>
</dbReference>
<dbReference type="GeneID" id="179370"/>
<dbReference type="KEGG" id="cel:CELE_F46B6.12"/>
<dbReference type="UCSC" id="F46B6.12.2">
    <property type="organism name" value="c. elegans"/>
</dbReference>
<dbReference type="AGR" id="WB:WBGene00009776"/>
<dbReference type="CTD" id="179370"/>
<dbReference type="WormBase" id="F46B6.12">
    <property type="protein sequence ID" value="CE44145"/>
    <property type="gene ID" value="WBGene00009776"/>
</dbReference>
<dbReference type="eggNOG" id="KOG1296">
    <property type="taxonomic scope" value="Eukaryota"/>
</dbReference>
<dbReference type="GeneTree" id="ENSGT00390000001523"/>
<dbReference type="HOGENOM" id="CLU_114688_1_0_1"/>
<dbReference type="InParanoid" id="Q9BI88"/>
<dbReference type="OMA" id="TAHFVWR"/>
<dbReference type="OrthoDB" id="10248838at2759"/>
<dbReference type="PhylomeDB" id="Q9BI88"/>
<dbReference type="PRO" id="PR:Q9BI88"/>
<dbReference type="Proteomes" id="UP000001940">
    <property type="component" value="Chromosome V"/>
</dbReference>
<dbReference type="Bgee" id="WBGene00009776">
    <property type="expression patterns" value="Expressed in larva and 4 other cell types or tissues"/>
</dbReference>
<dbReference type="GO" id="GO:0008270">
    <property type="term" value="F:zinc ion binding"/>
    <property type="evidence" value="ECO:0000250"/>
    <property type="project" value="UniProtKB"/>
</dbReference>
<dbReference type="InterPro" id="IPR008584">
    <property type="entry name" value="CXXC_Zn-binding_euk"/>
</dbReference>
<dbReference type="PANTHER" id="PTHR12857">
    <property type="entry name" value="CXXC MOTIF CONTAINING ZINC BINDING PROTEIN"/>
    <property type="match status" value="1"/>
</dbReference>
<dbReference type="PANTHER" id="PTHR12857:SF0">
    <property type="entry name" value="CXXC MOTIF CONTAINING ZINC BINDING PROTEIN"/>
    <property type="match status" value="1"/>
</dbReference>
<dbReference type="Pfam" id="PF05907">
    <property type="entry name" value="CXXC_Zn-b_euk"/>
    <property type="match status" value="1"/>
</dbReference>
<dbReference type="SUPFAM" id="SSF141678">
    <property type="entry name" value="MAL13P1.257-like"/>
    <property type="match status" value="1"/>
</dbReference>
<protein>
    <recommendedName>
        <fullName>UPF0587 protein F46B6.12</fullName>
    </recommendedName>
</protein>
<organism>
    <name type="scientific">Caenorhabditis elegans</name>
    <dbReference type="NCBI Taxonomy" id="6239"/>
    <lineage>
        <taxon>Eukaryota</taxon>
        <taxon>Metazoa</taxon>
        <taxon>Ecdysozoa</taxon>
        <taxon>Nematoda</taxon>
        <taxon>Chromadorea</taxon>
        <taxon>Rhabditida</taxon>
        <taxon>Rhabditina</taxon>
        <taxon>Rhabditomorpha</taxon>
        <taxon>Rhabditoidea</taxon>
        <taxon>Rhabditidae</taxon>
        <taxon>Peloderinae</taxon>
        <taxon>Caenorhabditis</taxon>
    </lineage>
</organism>